<gene>
    <name type="primary">Actb</name>
</gene>
<proteinExistence type="evidence at protein level"/>
<reference key="1">
    <citation type="journal article" date="1986" name="Nucleic Acids Res.">
        <title>Nucleotide sequence of a full-length cDNA for mouse cytoskeletal beta-actin mRNA.</title>
        <authorList>
            <person name="Tokunaga K."/>
            <person name="Taniguchi H."/>
            <person name="Yoda K."/>
            <person name="Shimizu M."/>
            <person name="Sakiyama S."/>
        </authorList>
    </citation>
    <scope>NUCLEOTIDE SEQUENCE [MRNA]</scope>
</reference>
<reference key="2">
    <citation type="journal article" date="2005" name="Science">
        <title>The transcriptional landscape of the mammalian genome.</title>
        <authorList>
            <person name="Carninci P."/>
            <person name="Kasukawa T."/>
            <person name="Katayama S."/>
            <person name="Gough J."/>
            <person name="Frith M.C."/>
            <person name="Maeda N."/>
            <person name="Oyama R."/>
            <person name="Ravasi T."/>
            <person name="Lenhard B."/>
            <person name="Wells C."/>
            <person name="Kodzius R."/>
            <person name="Shimokawa K."/>
            <person name="Bajic V.B."/>
            <person name="Brenner S.E."/>
            <person name="Batalov S."/>
            <person name="Forrest A.R."/>
            <person name="Zavolan M."/>
            <person name="Davis M.J."/>
            <person name="Wilming L.G."/>
            <person name="Aidinis V."/>
            <person name="Allen J.E."/>
            <person name="Ambesi-Impiombato A."/>
            <person name="Apweiler R."/>
            <person name="Aturaliya R.N."/>
            <person name="Bailey T.L."/>
            <person name="Bansal M."/>
            <person name="Baxter L."/>
            <person name="Beisel K.W."/>
            <person name="Bersano T."/>
            <person name="Bono H."/>
            <person name="Chalk A.M."/>
            <person name="Chiu K.P."/>
            <person name="Choudhary V."/>
            <person name="Christoffels A."/>
            <person name="Clutterbuck D.R."/>
            <person name="Crowe M.L."/>
            <person name="Dalla E."/>
            <person name="Dalrymple B.P."/>
            <person name="de Bono B."/>
            <person name="Della Gatta G."/>
            <person name="di Bernardo D."/>
            <person name="Down T."/>
            <person name="Engstrom P."/>
            <person name="Fagiolini M."/>
            <person name="Faulkner G."/>
            <person name="Fletcher C.F."/>
            <person name="Fukushima T."/>
            <person name="Furuno M."/>
            <person name="Futaki S."/>
            <person name="Gariboldi M."/>
            <person name="Georgii-Hemming P."/>
            <person name="Gingeras T.R."/>
            <person name="Gojobori T."/>
            <person name="Green R.E."/>
            <person name="Gustincich S."/>
            <person name="Harbers M."/>
            <person name="Hayashi Y."/>
            <person name="Hensch T.K."/>
            <person name="Hirokawa N."/>
            <person name="Hill D."/>
            <person name="Huminiecki L."/>
            <person name="Iacono M."/>
            <person name="Ikeo K."/>
            <person name="Iwama A."/>
            <person name="Ishikawa T."/>
            <person name="Jakt M."/>
            <person name="Kanapin A."/>
            <person name="Katoh M."/>
            <person name="Kawasawa Y."/>
            <person name="Kelso J."/>
            <person name="Kitamura H."/>
            <person name="Kitano H."/>
            <person name="Kollias G."/>
            <person name="Krishnan S.P."/>
            <person name="Kruger A."/>
            <person name="Kummerfeld S.K."/>
            <person name="Kurochkin I.V."/>
            <person name="Lareau L.F."/>
            <person name="Lazarevic D."/>
            <person name="Lipovich L."/>
            <person name="Liu J."/>
            <person name="Liuni S."/>
            <person name="McWilliam S."/>
            <person name="Madan Babu M."/>
            <person name="Madera M."/>
            <person name="Marchionni L."/>
            <person name="Matsuda H."/>
            <person name="Matsuzawa S."/>
            <person name="Miki H."/>
            <person name="Mignone F."/>
            <person name="Miyake S."/>
            <person name="Morris K."/>
            <person name="Mottagui-Tabar S."/>
            <person name="Mulder N."/>
            <person name="Nakano N."/>
            <person name="Nakauchi H."/>
            <person name="Ng P."/>
            <person name="Nilsson R."/>
            <person name="Nishiguchi S."/>
            <person name="Nishikawa S."/>
            <person name="Nori F."/>
            <person name="Ohara O."/>
            <person name="Okazaki Y."/>
            <person name="Orlando V."/>
            <person name="Pang K.C."/>
            <person name="Pavan W.J."/>
            <person name="Pavesi G."/>
            <person name="Pesole G."/>
            <person name="Petrovsky N."/>
            <person name="Piazza S."/>
            <person name="Reed J."/>
            <person name="Reid J.F."/>
            <person name="Ring B.Z."/>
            <person name="Ringwald M."/>
            <person name="Rost B."/>
            <person name="Ruan Y."/>
            <person name="Salzberg S.L."/>
            <person name="Sandelin A."/>
            <person name="Schneider C."/>
            <person name="Schoenbach C."/>
            <person name="Sekiguchi K."/>
            <person name="Semple C.A."/>
            <person name="Seno S."/>
            <person name="Sessa L."/>
            <person name="Sheng Y."/>
            <person name="Shibata Y."/>
            <person name="Shimada H."/>
            <person name="Shimada K."/>
            <person name="Silva D."/>
            <person name="Sinclair B."/>
            <person name="Sperling S."/>
            <person name="Stupka E."/>
            <person name="Sugiura K."/>
            <person name="Sultana R."/>
            <person name="Takenaka Y."/>
            <person name="Taki K."/>
            <person name="Tammoja K."/>
            <person name="Tan S.L."/>
            <person name="Tang S."/>
            <person name="Taylor M.S."/>
            <person name="Tegner J."/>
            <person name="Teichmann S.A."/>
            <person name="Ueda H.R."/>
            <person name="van Nimwegen E."/>
            <person name="Verardo R."/>
            <person name="Wei C.L."/>
            <person name="Yagi K."/>
            <person name="Yamanishi H."/>
            <person name="Zabarovsky E."/>
            <person name="Zhu S."/>
            <person name="Zimmer A."/>
            <person name="Hide W."/>
            <person name="Bult C."/>
            <person name="Grimmond S.M."/>
            <person name="Teasdale R.D."/>
            <person name="Liu E.T."/>
            <person name="Brusic V."/>
            <person name="Quackenbush J."/>
            <person name="Wahlestedt C."/>
            <person name="Mattick J.S."/>
            <person name="Hume D.A."/>
            <person name="Kai C."/>
            <person name="Sasaki D."/>
            <person name="Tomaru Y."/>
            <person name="Fukuda S."/>
            <person name="Kanamori-Katayama M."/>
            <person name="Suzuki M."/>
            <person name="Aoki J."/>
            <person name="Arakawa T."/>
            <person name="Iida J."/>
            <person name="Imamura K."/>
            <person name="Itoh M."/>
            <person name="Kato T."/>
            <person name="Kawaji H."/>
            <person name="Kawagashira N."/>
            <person name="Kawashima T."/>
            <person name="Kojima M."/>
            <person name="Kondo S."/>
            <person name="Konno H."/>
            <person name="Nakano K."/>
            <person name="Ninomiya N."/>
            <person name="Nishio T."/>
            <person name="Okada M."/>
            <person name="Plessy C."/>
            <person name="Shibata K."/>
            <person name="Shiraki T."/>
            <person name="Suzuki S."/>
            <person name="Tagami M."/>
            <person name="Waki K."/>
            <person name="Watahiki A."/>
            <person name="Okamura-Oho Y."/>
            <person name="Suzuki H."/>
            <person name="Kawai J."/>
            <person name="Hayashizaki Y."/>
        </authorList>
    </citation>
    <scope>NUCLEOTIDE SEQUENCE [LARGE SCALE MRNA]</scope>
    <source>
        <strain>BALB/cJ</strain>
        <strain>C57BL/6J</strain>
        <strain>NOD</strain>
        <tissue>Bone marrow</tissue>
        <tissue>Mammary gland</tissue>
        <tissue>Thymus</tissue>
    </source>
</reference>
<reference key="3">
    <citation type="journal article" date="1978" name="Eur. J. Biochem.">
        <title>Actin amino-acid sequences. Comparison of actins from calf thymus, bovine brain, and SV40-transformed mouse 3T3 cells with rabbit skeletal muscle actin.</title>
        <authorList>
            <person name="Vandekerckhove J."/>
            <person name="Weber K."/>
        </authorList>
    </citation>
    <scope>PROTEIN SEQUENCE OF 2-375</scope>
    <scope>CLEAVAGE OF INITIATOR METHIONINE</scope>
    <scope>ACETYLATION AT ASP-2</scope>
    <scope>METHYLATION AT HIS-73</scope>
    <source>
        <tissue>Thymus</tissue>
    </source>
</reference>
<reference key="4">
    <citation type="submission" date="2009-01" db="UniProtKB">
        <authorList>
            <person name="Lubec G."/>
            <person name="Klug S."/>
            <person name="Kang S.U."/>
            <person name="Sunyer B."/>
            <person name="Chen W.-Q."/>
        </authorList>
    </citation>
    <scope>PROTEIN SEQUENCE OF 19-39; 51-61; 85-113; 148-177; 184-191; 197-206; 216-254; 257-284; 291-326 AND 360-372</scope>
    <scope>IDENTIFICATION BY MASS SPECTROMETRY</scope>
    <source>
        <strain>C57BL/6J</strain>
        <strain>OF1</strain>
        <tissue>Brain</tissue>
        <tissue>Hippocampus</tissue>
    </source>
</reference>
<reference key="5">
    <citation type="journal article" date="1986" name="J. Mol. Evol.">
        <title>Comparison of three actin-coding sequences in the mouse; evolutionary relationships between the actin genes of warm-blooded vertebrates.</title>
        <authorList>
            <person name="Alonso S."/>
            <person name="Minty A."/>
            <person name="Bourlet Y."/>
            <person name="Buckingham M."/>
        </authorList>
    </citation>
    <scope>NUCLEOTIDE SEQUENCE [MRNA] OF 27-375</scope>
</reference>
<reference key="6">
    <citation type="submission" date="1998-10" db="UniProtKB">
        <authorList>
            <person name="Vilbois F."/>
        </authorList>
    </citation>
    <scope>ACETYLATION</scope>
    <source>
        <tissue>Muscle</tissue>
    </source>
</reference>
<reference key="7">
    <citation type="journal article" date="2003" name="J. Biol. Chem.">
        <title>Identification of targets for calcium signaling through the copine family of proteins. Characterization of a coiled-coil copine-binding motif.</title>
        <authorList>
            <person name="Tomsig J.L."/>
            <person name="Snyder S.L."/>
            <person name="Creutz C.E."/>
        </authorList>
    </citation>
    <scope>INTERACTION WITH CPNE1 AND CPNE4</scope>
</reference>
<reference key="8">
    <citation type="journal article" date="2005" name="Biochem. Biophys. Res. Commun.">
        <title>Proteomic identification of proteins conjugated to ISG15 in mouse and human cells.</title>
        <authorList>
            <person name="Giannakopoulos N.V."/>
            <person name="Luo J.K."/>
            <person name="Papov V."/>
            <person name="Zou W."/>
            <person name="Lenschow D.J."/>
            <person name="Jacobs B.S."/>
            <person name="Borden E.C."/>
            <person name="Li J."/>
            <person name="Virgin H.W."/>
            <person name="Zhang D.E."/>
        </authorList>
    </citation>
    <scope>ISGYLATION</scope>
</reference>
<reference key="9">
    <citation type="journal article" date="2011" name="Int. J. Androl.">
        <title>Identification and characterization of a novel Rab GTPase-activating protein in spermatids.</title>
        <authorList>
            <person name="Lin Y.H."/>
            <person name="Lin Y.M."/>
            <person name="Kuo Y.C."/>
            <person name="Wang Y.Y."/>
            <person name="Kuo P.L."/>
        </authorList>
    </citation>
    <scope>INTERACTION WITH TBC1D21</scope>
</reference>
<reference key="10">
    <citation type="journal article" date="2011" name="Proc. Natl. Acad. Sci. U.S.A.">
        <title>Tumor suppressor down-regulated in renal cell carcinoma 1 (DRR1) is a stress-induced actin bundling factor that modulates synaptic efficacy and cognition.</title>
        <authorList>
            <person name="Schmidt M.V."/>
            <person name="Schuelke J.P."/>
            <person name="Liebl C."/>
            <person name="Stiess M."/>
            <person name="Avrabos C."/>
            <person name="Bock J."/>
            <person name="Wochnik G.M."/>
            <person name="Davies H.A."/>
            <person name="Zimmermann N."/>
            <person name="Scharf S.H."/>
            <person name="Truembach D."/>
            <person name="Wurst W."/>
            <person name="Zieglgaensberger W."/>
            <person name="Turck C."/>
            <person name="Holsboer F."/>
            <person name="Stewart M.G."/>
            <person name="Bradke F."/>
            <person name="Eder M."/>
            <person name="Mueller M.B."/>
            <person name="Rein T."/>
        </authorList>
    </citation>
    <scope>INTERACTION WITH FAM107A</scope>
</reference>
<reference key="11">
    <citation type="journal article" date="2013" name="Mol. Cell">
        <title>MsrB1 and MICALs regulate actin assembly and macrophage function via reversible stereoselective methionine oxidation.</title>
        <authorList>
            <person name="Lee B.C."/>
            <person name="Peterfi Z."/>
            <person name="Hoffmann F.W."/>
            <person name="Moore R.E."/>
            <person name="Kaya A."/>
            <person name="Avanesov A."/>
            <person name="Tarrago L."/>
            <person name="Zhou Y."/>
            <person name="Weerapana E."/>
            <person name="Fomenko D.E."/>
            <person name="Hoffmann P.R."/>
            <person name="Gladyshev V.N."/>
        </authorList>
    </citation>
    <scope>OXIDATION AT MET-44 AND MET-47</scope>
    <scope>DEOXIDATION AT MET-44 AND MET-47</scope>
</reference>
<reference key="12">
    <citation type="journal article" date="2013" name="Science">
        <title>Nuclear actin network assembly by formins regulates the SRF coactivator MAL.</title>
        <authorList>
            <person name="Baarlink C."/>
            <person name="Wang H."/>
            <person name="Grosse R."/>
        </authorList>
    </citation>
    <scope>FUNCTION</scope>
    <scope>SUBCELLULAR LOCATION</scope>
</reference>
<reference key="13">
    <citation type="journal article" date="2014" name="Nat. Commun.">
        <title>AmotL2 links VE-cadherin to contractile actin fibres necessary for aortic lumen expansion.</title>
        <authorList>
            <person name="Hultin S."/>
            <person name="Zheng Y."/>
            <person name="Mojallal M."/>
            <person name="Vertuani S."/>
            <person name="Gentili C."/>
            <person name="Balland M."/>
            <person name="Milloud R."/>
            <person name="Belting H.G."/>
            <person name="Affolter M."/>
            <person name="Helker C.S."/>
            <person name="Adams R.H."/>
            <person name="Herzog W."/>
            <person name="Uhlen P."/>
            <person name="Majumdar A."/>
            <person name="Holmgren L."/>
        </authorList>
    </citation>
    <scope>INTERACTION WITH AMOTL2</scope>
</reference>
<reference key="14">
    <citation type="journal article" date="2015" name="J. Biol. Chem.">
        <title>Nuclear F-actin formation and reorganization upon cell spreading.</title>
        <authorList>
            <person name="Plessner M."/>
            <person name="Melak M."/>
            <person name="Chinchilla P."/>
            <person name="Baarlink C."/>
            <person name="Grosse R."/>
        </authorList>
    </citation>
    <scope>FUNCTION</scope>
    <scope>SUBUNIT</scope>
    <scope>SUBCELLULAR LOCATION</scope>
</reference>
<reference key="15">
    <citation type="journal article" date="2019" name="J. Mol. Histol.">
        <title>Mapping the sites of localization of epithelial sodium channel (ENaC) and CFTR in segments of the mammalian epididymis.</title>
        <authorList>
            <person name="Sharma S."/>
            <person name="Hanukoglu I."/>
        </authorList>
    </citation>
    <scope>TISSUE SPECIFICITY</scope>
</reference>
<reference key="16">
    <citation type="journal article" date="2019" name="Nature">
        <title>SETD3 is an actin histidine methyltransferase that prevents primary dystocia.</title>
        <authorList>
            <person name="Wilkinson A.W."/>
            <person name="Diep J."/>
            <person name="Dai S."/>
            <person name="Liu S."/>
            <person name="Ooi Y.S."/>
            <person name="Song D."/>
            <person name="Li T.M."/>
            <person name="Horton J.R."/>
            <person name="Zhang X."/>
            <person name="Liu C."/>
            <person name="Trivedi D.V."/>
            <person name="Ruppel K.M."/>
            <person name="Vilches-Moure J.G."/>
            <person name="Casey K.M."/>
            <person name="Mak J."/>
            <person name="Cowan T."/>
            <person name="Elias J.E."/>
            <person name="Nagamine C.M."/>
            <person name="Spudich J.A."/>
            <person name="Cheng X."/>
            <person name="Carette J.E."/>
            <person name="Gozani O."/>
        </authorList>
    </citation>
    <scope>METHYLATION AT HIS-73</scope>
</reference>
<reference key="17">
    <citation type="journal article" date="2020" name="FEBS J.">
        <title>Identification and classification of epithelial cells in nephron segments by actin cytoskeleton patterns.</title>
        <authorList>
            <person name="Kumaran G.K."/>
            <person name="Hanukoglu I."/>
        </authorList>
    </citation>
    <scope>TISSUE SPECIFICITY</scope>
</reference>
<reference key="18">
    <citation type="journal article" date="2024" name="Mol. Ther.">
        <title>Critical role of TPRN rings in the stereocilia for hearing.</title>
        <authorList>
            <person name="Qi J."/>
            <person name="Tan F."/>
            <person name="Zhang L."/>
            <person name="Zhou Y."/>
            <person name="Zhang Z."/>
            <person name="Sun Q."/>
            <person name="Li N."/>
            <person name="Fang Y."/>
            <person name="Chen X."/>
            <person name="Wu Y."/>
            <person name="Zhong G."/>
            <person name="Chai R."/>
        </authorList>
    </citation>
    <scope>INTERACTION WITH TPRN</scope>
</reference>
<protein>
    <recommendedName>
        <fullName>Actin, cytoplasmic 1</fullName>
    </recommendedName>
    <alternativeName>
        <fullName>Beta-actin</fullName>
        <ecNumber evidence="2">3.6.4.-</ecNumber>
    </alternativeName>
    <component>
        <recommendedName>
            <fullName>Actin, cytoplasmic 1, N-terminally processed</fullName>
        </recommendedName>
    </component>
</protein>
<accession>P60710</accession>
<accession>P02570</accession>
<accession>P70514</accession>
<accession>P99021</accession>
<accession>Q11211</accession>
<accession>Q3TI89</accession>
<accession>Q3TVP6</accession>
<accession>Q64316</accession>
<accession>Q6ZWM3</accession>
<name>ACTB_MOUSE</name>
<dbReference type="EC" id="3.6.4.-" evidence="2"/>
<dbReference type="EMBL" id="X03672">
    <property type="protein sequence ID" value="CAA27307.1"/>
    <property type="molecule type" value="mRNA"/>
</dbReference>
<dbReference type="EMBL" id="AK088691">
    <property type="protein sequence ID" value="BAC40507.1"/>
    <property type="molecule type" value="mRNA"/>
</dbReference>
<dbReference type="EMBL" id="AK145191">
    <property type="protein sequence ID" value="BAE26283.1"/>
    <property type="molecule type" value="mRNA"/>
</dbReference>
<dbReference type="EMBL" id="AK145196">
    <property type="protein sequence ID" value="BAE26288.1"/>
    <property type="molecule type" value="mRNA"/>
</dbReference>
<dbReference type="EMBL" id="AK145308">
    <property type="protein sequence ID" value="BAE26359.1"/>
    <property type="molecule type" value="mRNA"/>
</dbReference>
<dbReference type="EMBL" id="AK150711">
    <property type="protein sequence ID" value="BAE29789.1"/>
    <property type="molecule type" value="mRNA"/>
</dbReference>
<dbReference type="EMBL" id="AK150879">
    <property type="protein sequence ID" value="BAE29928.1"/>
    <property type="molecule type" value="mRNA"/>
</dbReference>
<dbReference type="EMBL" id="AK151010">
    <property type="protein sequence ID" value="BAE30031.1"/>
    <property type="molecule type" value="mRNA"/>
</dbReference>
<dbReference type="EMBL" id="AK151136">
    <property type="protein sequence ID" value="BAE30144.1"/>
    <property type="molecule type" value="mRNA"/>
</dbReference>
<dbReference type="EMBL" id="AK151145">
    <property type="protein sequence ID" value="BAE30152.1"/>
    <property type="molecule type" value="mRNA"/>
</dbReference>
<dbReference type="EMBL" id="AK151159">
    <property type="protein sequence ID" value="BAE30164.1"/>
    <property type="molecule type" value="mRNA"/>
</dbReference>
<dbReference type="EMBL" id="AK151166">
    <property type="protein sequence ID" value="BAE30169.1"/>
    <property type="molecule type" value="mRNA"/>
</dbReference>
<dbReference type="EMBL" id="AK151190">
    <property type="protein sequence ID" value="BAE30187.1"/>
    <property type="molecule type" value="mRNA"/>
</dbReference>
<dbReference type="EMBL" id="AK151202">
    <property type="protein sequence ID" value="BAE30199.1"/>
    <property type="molecule type" value="mRNA"/>
</dbReference>
<dbReference type="EMBL" id="AK151226">
    <property type="protein sequence ID" value="BAE30218.1"/>
    <property type="molecule type" value="mRNA"/>
</dbReference>
<dbReference type="EMBL" id="AK151277">
    <property type="protein sequence ID" value="BAE30264.1"/>
    <property type="molecule type" value="mRNA"/>
</dbReference>
<dbReference type="EMBL" id="AK151350">
    <property type="protein sequence ID" value="BAE30326.1"/>
    <property type="molecule type" value="mRNA"/>
</dbReference>
<dbReference type="EMBL" id="AK151398">
    <property type="protein sequence ID" value="BAE30366.1"/>
    <property type="molecule type" value="mRNA"/>
</dbReference>
<dbReference type="EMBL" id="AK151995">
    <property type="protein sequence ID" value="BAE30859.1"/>
    <property type="molecule type" value="mRNA"/>
</dbReference>
<dbReference type="EMBL" id="AK151999">
    <property type="protein sequence ID" value="BAE30863.1"/>
    <property type="molecule type" value="mRNA"/>
</dbReference>
<dbReference type="EMBL" id="AK152615">
    <property type="protein sequence ID" value="BAE31359.1"/>
    <property type="molecule type" value="mRNA"/>
</dbReference>
<dbReference type="EMBL" id="AK152651">
    <property type="protein sequence ID" value="BAE31388.1"/>
    <property type="molecule type" value="mRNA"/>
</dbReference>
<dbReference type="EMBL" id="AK152844">
    <property type="protein sequence ID" value="BAE31537.1"/>
    <property type="molecule type" value="mRNA"/>
</dbReference>
<dbReference type="EMBL" id="AK159759">
    <property type="protein sequence ID" value="BAE35350.1"/>
    <property type="molecule type" value="mRNA"/>
</dbReference>
<dbReference type="EMBL" id="AK159834">
    <property type="protein sequence ID" value="BAE35412.1"/>
    <property type="molecule type" value="mRNA"/>
</dbReference>
<dbReference type="EMBL" id="AK160029">
    <property type="protein sequence ID" value="BAE35572.1"/>
    <property type="molecule type" value="mRNA"/>
</dbReference>
<dbReference type="EMBL" id="AK166349">
    <property type="protein sequence ID" value="BAE38723.1"/>
    <property type="molecule type" value="mRNA"/>
</dbReference>
<dbReference type="EMBL" id="AK166498">
    <property type="protein sequence ID" value="BAE38810.1"/>
    <property type="molecule type" value="mRNA"/>
</dbReference>
<dbReference type="EMBL" id="AK167117">
    <property type="protein sequence ID" value="BAE39265.1"/>
    <property type="molecule type" value="mRNA"/>
</dbReference>
<dbReference type="EMBL" id="AK167960">
    <property type="protein sequence ID" value="BAE39957.1"/>
    <property type="molecule type" value="mRNA"/>
</dbReference>
<dbReference type="EMBL" id="X03765">
    <property type="protein sequence ID" value="CAA27396.1"/>
    <property type="molecule type" value="mRNA"/>
</dbReference>
<dbReference type="EMBL" id="M12481">
    <property type="protein sequence ID" value="AAA37144.1"/>
    <property type="molecule type" value="mRNA"/>
</dbReference>
<dbReference type="CCDS" id="CCDS19833.1"/>
<dbReference type="PIR" id="A39104">
    <property type="entry name" value="ATMSB"/>
</dbReference>
<dbReference type="RefSeq" id="NP_031419.1">
    <property type="nucleotide sequence ID" value="NM_007393.5"/>
</dbReference>
<dbReference type="SMR" id="P60710"/>
<dbReference type="BioGRID" id="197944">
    <property type="interactions" value="372"/>
</dbReference>
<dbReference type="ComplexPortal" id="CPX-1232">
    <property type="entry name" value="SWI/SNF ATP-dependent chromatin remodeling complex, ACTL6A-ARID1A-SMARCA2 variant"/>
</dbReference>
<dbReference type="ComplexPortal" id="CPX-1233">
    <property type="entry name" value="SWI/SNF ATP-dependent chromatin remodeling complex, ACTL6A-ARID1A-SMARCA4 variant"/>
</dbReference>
<dbReference type="ComplexPortal" id="CPX-1234">
    <property type="entry name" value="SWI/SNF ATP-dependent chromatin remodeling complex, ACTL6A-ARID1B-SMARCA2 variant"/>
</dbReference>
<dbReference type="ComplexPortal" id="CPX-1235">
    <property type="entry name" value="SWI/SNF ATP-dependent chromatin remodeling complex, ACTL6A-ARID1B-SMARCA4 variant"/>
</dbReference>
<dbReference type="ComplexPortal" id="CPX-1236">
    <property type="entry name" value="SWI/SNF ATP-dependent chromatin remodeling complex, ACTL6B-ARID1A-SMARCA2 variant"/>
</dbReference>
<dbReference type="ComplexPortal" id="CPX-1237">
    <property type="entry name" value="SWI/SNF ATP-dependent chromatin remodeling complex, ACTL6B-ARID1A-SMARCA4 variant"/>
</dbReference>
<dbReference type="ComplexPortal" id="CPX-1238">
    <property type="entry name" value="SWI/SNF ATP-dependent chromatin remodeling complex, ACTL6B-ARID1B-SMARCA2 variant"/>
</dbReference>
<dbReference type="ComplexPortal" id="CPX-1239">
    <property type="entry name" value="SWI/SNF ATP-dependent chromatin remodeling complex, ACTL6B-ARID1B-SMARCA4 variant"/>
</dbReference>
<dbReference type="ComplexPortal" id="CPX-1240">
    <property type="entry name" value="Muscle cell-specific SWI/SNF ATP-dependent chromatin remodeling complex, ACTL6A-ARID1A-SMARCA2 variant"/>
</dbReference>
<dbReference type="ComplexPortal" id="CPX-1241">
    <property type="entry name" value="Muscle cell-specific SWI/SNF ATP-dependent chromatin remodeling complex, ACTL6A-ARID1A-SMARCA4 variant"/>
</dbReference>
<dbReference type="ComplexPortal" id="CPX-1242">
    <property type="entry name" value="Muscle cell-specific SWI/SNF ATP-dependent chromatin remodeling complex, ACTL6A-ARID1B-SMARCA2 variant"/>
</dbReference>
<dbReference type="ComplexPortal" id="CPX-1243">
    <property type="entry name" value="Muscle cell-specific SWI/SNF ATP-dependent chromatin remodeling complex, ACTL6A-ARID1B-SMARCA4 variant"/>
</dbReference>
<dbReference type="ComplexPortal" id="CPX-1244">
    <property type="entry name" value="Muscle cell-specific SWI/SNF ATP-dependent chromatin remodeling complex, ACTL6B-ARID1A-SMARCA2 variant"/>
</dbReference>
<dbReference type="ComplexPortal" id="CPX-1245">
    <property type="entry name" value="Muscle cell-specific SWI/SNF ATP-dependent chromatin remodeling complex, ACTL6B-ARID1A-SMARCA4 variant"/>
</dbReference>
<dbReference type="ComplexPortal" id="CPX-1246">
    <property type="entry name" value="Muscle cell-specific SWI/SNF ATP-dependent chromatin remodeling complex, ACTL6B-ARID1B-SMARCA2 variant"/>
</dbReference>
<dbReference type="ComplexPortal" id="CPX-1247">
    <property type="entry name" value="Muscle cell-specific SWI/SNF ATP-dependent chromatin remodeling complex, ACTL6B-ARID1B-SMARCA4 variant"/>
</dbReference>
<dbReference type="ComplexPortal" id="CPX-1248">
    <property type="entry name" value="Polybromo-associated SWI/SNF ATP-dependent chromatin remodeling complex, ACTL6A variant"/>
</dbReference>
<dbReference type="ComplexPortal" id="CPX-1250">
    <property type="entry name" value="Polybromo-associated SWI/SNF ATP-dependent chromatin remodeling complex, ACTL6B variant"/>
</dbReference>
<dbReference type="ComplexPortal" id="CPX-1251">
    <property type="entry name" value="Embryonic stem cell-specific SWI/SNF ATP-dependent chromatin remodeling complex"/>
</dbReference>
<dbReference type="ComplexPortal" id="CPX-1252">
    <property type="entry name" value="Neural progenitor-specific SWI/SNF ATP-dependent chromatin remodeling complex, ARID1A-SMARCA2 variant"/>
</dbReference>
<dbReference type="ComplexPortal" id="CPX-1253">
    <property type="entry name" value="Neural progenitor-specific SWI/SNF ATP-dependent chromatin remodeling complex, ARID1A-SMARCA4 variant"/>
</dbReference>
<dbReference type="ComplexPortal" id="CPX-1254">
    <property type="entry name" value="Neural progenitor-specific SWI/SNF ATP-dependent chromatin remodeling complex, ARID1B-SMARCA2 variant"/>
</dbReference>
<dbReference type="ComplexPortal" id="CPX-1255">
    <property type="entry name" value="Neural progenitor-specific SWI/SNF ATP-dependent chromatin remodeling complex, ARID1B-SMARCA4 variant"/>
</dbReference>
<dbReference type="ComplexPortal" id="CPX-1256">
    <property type="entry name" value="Neuron-specific SWI/SNF ATP-dependent chromatin remodeling complex, ARID1A-SMARCA2 variant"/>
</dbReference>
<dbReference type="ComplexPortal" id="CPX-1257">
    <property type="entry name" value="Neuron-specific SWI/SNF ATP-dependent chromatin remodeling complex, ARID1A-SMARCA4 variant"/>
</dbReference>
<dbReference type="ComplexPortal" id="CPX-1258">
    <property type="entry name" value="Neuron-specific SWI/SNF ATP-dependent chromatin remodeling complex, ARID1B-SMARCA2 variant"/>
</dbReference>
<dbReference type="ComplexPortal" id="CPX-1259">
    <property type="entry name" value="Neuron-specific SWI/SNF ATP-dependent chromatin remodeling complex, ARID1B-SMARCA4 variant"/>
</dbReference>
<dbReference type="ComplexPortal" id="CPX-1261">
    <property type="entry name" value="Brain-specific SWI/SNF ATP-dependent chromatin remodeling complex, ARID1A-SMARCA2 variant"/>
</dbReference>
<dbReference type="ComplexPortal" id="CPX-1262">
    <property type="entry name" value="Brain-specific SWI/SNF ATP-dependent chromatin remodeling complex, ARID1A-SMARCA4 variant"/>
</dbReference>
<dbReference type="ComplexPortal" id="CPX-1263">
    <property type="entry name" value="Brain-specific SWI/SNF ATP-dependent chromatin remodeling complex, ARID1B-SMARCA2 variant"/>
</dbReference>
<dbReference type="ComplexPortal" id="CPX-1264">
    <property type="entry name" value="Brain-specific SWI/SNF ATP-dependent chromatin remodeling complex, ARID1B-SMARCA4 variant"/>
</dbReference>
<dbReference type="ComplexPortal" id="CPX-4202">
    <property type="entry name" value="GBAF (SWI/SNF) ATP-dependent chromatin remodeling complex, ACTL6A-BICRA-SMARCA2 variant"/>
</dbReference>
<dbReference type="ComplexPortal" id="CPX-4204">
    <property type="entry name" value="GBAF (SWI/SNF) ATP-dependent chromatin remodeling complex, ACTL6A-BICRAL-SMARCA2 variant"/>
</dbReference>
<dbReference type="ComplexPortal" id="CPX-4221">
    <property type="entry name" value="GBAF (SWI/SNF) ATP-dependent chromatin remodeling complex, ACTL6A-BICRA-SMARCA4 variant"/>
</dbReference>
<dbReference type="ComplexPortal" id="CPX-4222">
    <property type="entry name" value="GBAF (SWI/SNF) ATP-dependent chromatin remodeling complex, ACTL6A-BICRAL-SMARCA4 variant"/>
</dbReference>
<dbReference type="ComplexPortal" id="CPX-4227">
    <property type="entry name" value="GBAF (SWI/SNF) ATP-dependent chromatin remodeling complex, ACTL6B-BICRA-SMARCA2 variant"/>
</dbReference>
<dbReference type="ComplexPortal" id="CPX-4228">
    <property type="entry name" value="GBAF (SWI/SNF) ATP-dependent chromatin remodeling complex, ACTL6B-BICRAL-SMARCA2 variant"/>
</dbReference>
<dbReference type="ComplexPortal" id="CPX-4229">
    <property type="entry name" value="GBAF (SWI/SNF) ATP-dependent chromatin remodeling complex, ACTL6B-BICRA-SMARCA4 variant"/>
</dbReference>
<dbReference type="ComplexPortal" id="CPX-4230">
    <property type="entry name" value="GBAF (SWI/SNF) ATP-dependent chromatin remodeling complex, ACTL6B-BICRAL-SMARCA4 variant"/>
</dbReference>
<dbReference type="ComplexPortal" id="CPX-990">
    <property type="entry name" value="NuA4 histone acetyltransferase complex"/>
</dbReference>
<dbReference type="CORUM" id="P60710"/>
<dbReference type="DIP" id="DIP-31574N"/>
<dbReference type="FunCoup" id="P60710">
    <property type="interactions" value="2331"/>
</dbReference>
<dbReference type="IntAct" id="P60710">
    <property type="interactions" value="225"/>
</dbReference>
<dbReference type="MINT" id="P60710"/>
<dbReference type="STRING" id="10090.ENSMUSP00000098066"/>
<dbReference type="ChEMBL" id="CHEMBL5169138"/>
<dbReference type="CarbonylDB" id="P60710"/>
<dbReference type="GlyGen" id="P60710">
    <property type="glycosylation" value="8 sites, 1 N-linked glycan (1 site), 1 O-linked glycan (7 sites)"/>
</dbReference>
<dbReference type="iPTMnet" id="P60710"/>
<dbReference type="PhosphoSitePlus" id="P60710"/>
<dbReference type="SwissPalm" id="P60710"/>
<dbReference type="REPRODUCTION-2DPAGE" id="P60710"/>
<dbReference type="CPTAC" id="non-CPTAC-3542"/>
<dbReference type="jPOST" id="P60710"/>
<dbReference type="PaxDb" id="10090-ENSMUSP00000098066"/>
<dbReference type="PeptideAtlas" id="P60710"/>
<dbReference type="ProteomicsDB" id="285751"/>
<dbReference type="Pumba" id="P60710"/>
<dbReference type="TopDownProteomics" id="P60710"/>
<dbReference type="Antibodypedia" id="3623">
    <property type="antibodies" value="2078 antibodies from 59 providers"/>
</dbReference>
<dbReference type="DNASU" id="11461"/>
<dbReference type="Ensembl" id="ENSMUST00000100497.11">
    <property type="protein sequence ID" value="ENSMUSP00000098066.5"/>
    <property type="gene ID" value="ENSMUSG00000029580.15"/>
</dbReference>
<dbReference type="GeneID" id="11461"/>
<dbReference type="KEGG" id="mmu:11461"/>
<dbReference type="UCSC" id="uc009ajk.1">
    <property type="organism name" value="mouse"/>
</dbReference>
<dbReference type="AGR" id="MGI:87904"/>
<dbReference type="CTD" id="60"/>
<dbReference type="MGI" id="MGI:87904">
    <property type="gene designation" value="Actb"/>
</dbReference>
<dbReference type="VEuPathDB" id="HostDB:ENSMUSG00000029580"/>
<dbReference type="eggNOG" id="KOG0676">
    <property type="taxonomic scope" value="Eukaryota"/>
</dbReference>
<dbReference type="GeneTree" id="ENSGT00950000182960"/>
<dbReference type="InParanoid" id="P60710"/>
<dbReference type="OMA" id="FHTTAER"/>
<dbReference type="OrthoDB" id="9546537at2759"/>
<dbReference type="PhylomeDB" id="P60710"/>
<dbReference type="TreeFam" id="TF354237"/>
<dbReference type="Reactome" id="R-MMU-190873">
    <property type="pathway name" value="Gap junction degradation"/>
</dbReference>
<dbReference type="Reactome" id="R-MMU-196025">
    <property type="pathway name" value="Formation of annular gap junctions"/>
</dbReference>
<dbReference type="Reactome" id="R-MMU-2029482">
    <property type="pathway name" value="Regulation of actin dynamics for phagocytic cup formation"/>
</dbReference>
<dbReference type="Reactome" id="R-MMU-3928662">
    <property type="pathway name" value="EPHB-mediated forward signaling"/>
</dbReference>
<dbReference type="Reactome" id="R-MMU-418990">
    <property type="pathway name" value="Adherens junctions interactions"/>
</dbReference>
<dbReference type="Reactome" id="R-MMU-437239">
    <property type="pathway name" value="Recycling pathway of L1"/>
</dbReference>
<dbReference type="Reactome" id="R-MMU-4420097">
    <property type="pathway name" value="VEGFA-VEGFR2 Pathway"/>
</dbReference>
<dbReference type="Reactome" id="R-MMU-445095">
    <property type="pathway name" value="Interaction between L1 and Ankyrins"/>
</dbReference>
<dbReference type="Reactome" id="R-MMU-446353">
    <property type="pathway name" value="Cell-extracellular matrix interactions"/>
</dbReference>
<dbReference type="Reactome" id="R-MMU-5250924">
    <property type="pathway name" value="B-WICH complex positively regulates rRNA expression"/>
</dbReference>
<dbReference type="Reactome" id="R-MMU-5626467">
    <property type="pathway name" value="RHO GTPases activate IQGAPs"/>
</dbReference>
<dbReference type="Reactome" id="R-MMU-5663213">
    <property type="pathway name" value="RHO GTPases Activate WASPs and WAVEs"/>
</dbReference>
<dbReference type="Reactome" id="R-MMU-5663220">
    <property type="pathway name" value="RHO GTPases Activate Formins"/>
</dbReference>
<dbReference type="Reactome" id="R-MMU-5674135">
    <property type="pathway name" value="MAP2K and MAPK activation"/>
</dbReference>
<dbReference type="Reactome" id="R-MMU-5689603">
    <property type="pathway name" value="UCH proteinases"/>
</dbReference>
<dbReference type="Reactome" id="R-MMU-5696394">
    <property type="pathway name" value="DNA Damage Recognition in GG-NER"/>
</dbReference>
<dbReference type="Reactome" id="R-MMU-8856828">
    <property type="pathway name" value="Clathrin-mediated endocytosis"/>
</dbReference>
<dbReference type="Reactome" id="R-MMU-9035034">
    <property type="pathway name" value="RHOF GTPase cycle"/>
</dbReference>
<dbReference type="Reactome" id="R-MMU-9913351">
    <property type="pathway name" value="Formation of the dystrophin-glycoprotein complex (DGC)"/>
</dbReference>
<dbReference type="BioGRID-ORCS" id="11461">
    <property type="hits" value="29 hits in 80 CRISPR screens"/>
</dbReference>
<dbReference type="CD-CODE" id="8F289D40">
    <property type="entry name" value="ELVA"/>
</dbReference>
<dbReference type="ChiTaRS" id="Actb">
    <property type="organism name" value="mouse"/>
</dbReference>
<dbReference type="PRO" id="PR:P60710"/>
<dbReference type="Proteomes" id="UP000000589">
    <property type="component" value="Chromosome 5"/>
</dbReference>
<dbReference type="RNAct" id="P60710">
    <property type="molecule type" value="protein"/>
</dbReference>
<dbReference type="Bgee" id="ENSMUSG00000029580">
    <property type="expression patterns" value="Expressed in late embryo and 265 other cell types or tissues"/>
</dbReference>
<dbReference type="ExpressionAtlas" id="P60710">
    <property type="expression patterns" value="baseline and differential"/>
</dbReference>
<dbReference type="GO" id="GO:0015629">
    <property type="term" value="C:actin cytoskeleton"/>
    <property type="evidence" value="ECO:0000250"/>
    <property type="project" value="UniProtKB"/>
</dbReference>
<dbReference type="GO" id="GO:0005912">
    <property type="term" value="C:adherens junction"/>
    <property type="evidence" value="ECO:0007669"/>
    <property type="project" value="Ensembl"/>
</dbReference>
<dbReference type="GO" id="GO:0043296">
    <property type="term" value="C:apical junction complex"/>
    <property type="evidence" value="ECO:0007669"/>
    <property type="project" value="Ensembl"/>
</dbReference>
<dbReference type="GO" id="GO:0140092">
    <property type="term" value="C:bBAF complex"/>
    <property type="evidence" value="ECO:0000303"/>
    <property type="project" value="ComplexPortal"/>
</dbReference>
<dbReference type="GO" id="GO:0035060">
    <property type="term" value="C:brahma complex"/>
    <property type="evidence" value="ECO:0000303"/>
    <property type="project" value="ComplexPortal"/>
</dbReference>
<dbReference type="GO" id="GO:0005903">
    <property type="term" value="C:brush border"/>
    <property type="evidence" value="ECO:0000314"/>
    <property type="project" value="MGI"/>
</dbReference>
<dbReference type="GO" id="GO:0044305">
    <property type="term" value="C:calyx of Held"/>
    <property type="evidence" value="ECO:0000314"/>
    <property type="project" value="SynGO"/>
</dbReference>
<dbReference type="GO" id="GO:0000785">
    <property type="term" value="C:chromatin"/>
    <property type="evidence" value="ECO:0000303"/>
    <property type="project" value="ComplexPortal"/>
</dbReference>
<dbReference type="GO" id="GO:0030863">
    <property type="term" value="C:cortical cytoskeleton"/>
    <property type="evidence" value="ECO:0000314"/>
    <property type="project" value="MGI"/>
</dbReference>
<dbReference type="GO" id="GO:0005737">
    <property type="term" value="C:cytoplasm"/>
    <property type="evidence" value="ECO:0000314"/>
    <property type="project" value="ARUK-UCL"/>
</dbReference>
<dbReference type="GO" id="GO:0036464">
    <property type="term" value="C:cytoplasmic ribonucleoprotein granule"/>
    <property type="evidence" value="ECO:0007669"/>
    <property type="project" value="Ensembl"/>
</dbReference>
<dbReference type="GO" id="GO:0005856">
    <property type="term" value="C:cytoskeleton"/>
    <property type="evidence" value="ECO:0000314"/>
    <property type="project" value="ARUK-UCL"/>
</dbReference>
<dbReference type="GO" id="GO:0005829">
    <property type="term" value="C:cytosol"/>
    <property type="evidence" value="ECO:0000314"/>
    <property type="project" value="MGI"/>
</dbReference>
<dbReference type="GO" id="GO:0097433">
    <property type="term" value="C:dense body"/>
    <property type="evidence" value="ECO:0000250"/>
    <property type="project" value="AgBase"/>
</dbReference>
<dbReference type="GO" id="GO:0005925">
    <property type="term" value="C:focal adhesion"/>
    <property type="evidence" value="ECO:0000250"/>
    <property type="project" value="AgBase"/>
</dbReference>
<dbReference type="GO" id="GO:0140288">
    <property type="term" value="C:GBAF complex"/>
    <property type="evidence" value="ECO:0000303"/>
    <property type="project" value="ComplexPortal"/>
</dbReference>
<dbReference type="GO" id="GO:0098978">
    <property type="term" value="C:glutamatergic synapse"/>
    <property type="evidence" value="ECO:0007669"/>
    <property type="project" value="Ensembl"/>
</dbReference>
<dbReference type="GO" id="GO:0000776">
    <property type="term" value="C:kinetochore"/>
    <property type="evidence" value="ECO:0000303"/>
    <property type="project" value="ComplexPortal"/>
</dbReference>
<dbReference type="GO" id="GO:0030027">
    <property type="term" value="C:lamellipodium"/>
    <property type="evidence" value="ECO:0007669"/>
    <property type="project" value="Ensembl"/>
</dbReference>
<dbReference type="GO" id="GO:0043209">
    <property type="term" value="C:myelin sheath"/>
    <property type="evidence" value="ECO:0007005"/>
    <property type="project" value="UniProtKB"/>
</dbReference>
<dbReference type="GO" id="GO:0071565">
    <property type="term" value="C:nBAF complex"/>
    <property type="evidence" value="ECO:0000303"/>
    <property type="project" value="ComplexPortal"/>
</dbReference>
<dbReference type="GO" id="GO:0071564">
    <property type="term" value="C:npBAF complex"/>
    <property type="evidence" value="ECO:0000303"/>
    <property type="project" value="ComplexPortal"/>
</dbReference>
<dbReference type="GO" id="GO:0035267">
    <property type="term" value="C:NuA4 histone acetyltransferase complex"/>
    <property type="evidence" value="ECO:0000266"/>
    <property type="project" value="ComplexPortal"/>
</dbReference>
<dbReference type="GO" id="GO:0016363">
    <property type="term" value="C:nuclear matrix"/>
    <property type="evidence" value="ECO:0000303"/>
    <property type="project" value="ComplexPortal"/>
</dbReference>
<dbReference type="GO" id="GO:0005654">
    <property type="term" value="C:nucleoplasm"/>
    <property type="evidence" value="ECO:0000304"/>
    <property type="project" value="Reactome"/>
</dbReference>
<dbReference type="GO" id="GO:0000786">
    <property type="term" value="C:nucleosome"/>
    <property type="evidence" value="ECO:0000266"/>
    <property type="project" value="ComplexPortal"/>
</dbReference>
<dbReference type="GO" id="GO:0005634">
    <property type="term" value="C:nucleus"/>
    <property type="evidence" value="ECO:0000314"/>
    <property type="project" value="MGI"/>
</dbReference>
<dbReference type="GO" id="GO:0005886">
    <property type="term" value="C:plasma membrane"/>
    <property type="evidence" value="ECO:0000250"/>
    <property type="project" value="AgBase"/>
</dbReference>
<dbReference type="GO" id="GO:0098871">
    <property type="term" value="C:postsynaptic actin cytoskeleton"/>
    <property type="evidence" value="ECO:0007669"/>
    <property type="project" value="Ensembl"/>
</dbReference>
<dbReference type="GO" id="GO:0032991">
    <property type="term" value="C:protein-containing complex"/>
    <property type="evidence" value="ECO:0000250"/>
    <property type="project" value="UniProtKB"/>
</dbReference>
<dbReference type="GO" id="GO:1990904">
    <property type="term" value="C:ribonucleoprotein complex"/>
    <property type="evidence" value="ECO:0007669"/>
    <property type="project" value="Ensembl"/>
</dbReference>
<dbReference type="GO" id="GO:0016586">
    <property type="term" value="C:RSC-type complex"/>
    <property type="evidence" value="ECO:0000303"/>
    <property type="project" value="ComplexPortal"/>
</dbReference>
<dbReference type="GO" id="GO:0098685">
    <property type="term" value="C:Schaffer collateral - CA1 synapse"/>
    <property type="evidence" value="ECO:0000314"/>
    <property type="project" value="SynGO"/>
</dbReference>
<dbReference type="GO" id="GO:0016514">
    <property type="term" value="C:SWI/SNF complex"/>
    <property type="evidence" value="ECO:0000303"/>
    <property type="project" value="ComplexPortal"/>
</dbReference>
<dbReference type="GO" id="GO:0070160">
    <property type="term" value="C:tight junction"/>
    <property type="evidence" value="ECO:0007669"/>
    <property type="project" value="Ensembl"/>
</dbReference>
<dbReference type="GO" id="GO:0005524">
    <property type="term" value="F:ATP binding"/>
    <property type="evidence" value="ECO:0007669"/>
    <property type="project" value="UniProtKB-KW"/>
</dbReference>
<dbReference type="GO" id="GO:0016887">
    <property type="term" value="F:ATP hydrolysis activity"/>
    <property type="evidence" value="ECO:0007669"/>
    <property type="project" value="Ensembl"/>
</dbReference>
<dbReference type="GO" id="GO:0042802">
    <property type="term" value="F:identical protein binding"/>
    <property type="evidence" value="ECO:0007669"/>
    <property type="project" value="Ensembl"/>
</dbReference>
<dbReference type="GO" id="GO:0019894">
    <property type="term" value="F:kinesin binding"/>
    <property type="evidence" value="ECO:0007669"/>
    <property type="project" value="Ensembl"/>
</dbReference>
<dbReference type="GO" id="GO:0050998">
    <property type="term" value="F:nitric-oxide synthase binding"/>
    <property type="evidence" value="ECO:0007669"/>
    <property type="project" value="Ensembl"/>
</dbReference>
<dbReference type="GO" id="GO:0030235">
    <property type="term" value="F:nitric-oxide synthase regulator activity"/>
    <property type="evidence" value="ECO:0007669"/>
    <property type="project" value="Ensembl"/>
</dbReference>
<dbReference type="GO" id="GO:0019901">
    <property type="term" value="F:protein kinase binding"/>
    <property type="evidence" value="ECO:0007669"/>
    <property type="project" value="Ensembl"/>
</dbReference>
<dbReference type="GO" id="GO:0098973">
    <property type="term" value="F:structural constituent of postsynaptic actin cytoskeleton"/>
    <property type="evidence" value="ECO:0007669"/>
    <property type="project" value="Ensembl"/>
</dbReference>
<dbReference type="GO" id="GO:0030957">
    <property type="term" value="F:Tat protein binding"/>
    <property type="evidence" value="ECO:0007669"/>
    <property type="project" value="Ensembl"/>
</dbReference>
<dbReference type="GO" id="GO:0141108">
    <property type="term" value="F:transporter regulator activity"/>
    <property type="evidence" value="ECO:0007669"/>
    <property type="project" value="Ensembl"/>
</dbReference>
<dbReference type="GO" id="GO:0034333">
    <property type="term" value="P:adherens junction assembly"/>
    <property type="evidence" value="ECO:0007669"/>
    <property type="project" value="Ensembl"/>
</dbReference>
<dbReference type="GO" id="GO:0045176">
    <property type="term" value="P:apical protein localization"/>
    <property type="evidence" value="ECO:0007669"/>
    <property type="project" value="Ensembl"/>
</dbReference>
<dbReference type="GO" id="GO:0048870">
    <property type="term" value="P:cell motility"/>
    <property type="evidence" value="ECO:0007669"/>
    <property type="project" value="Ensembl"/>
</dbReference>
<dbReference type="GO" id="GO:0072749">
    <property type="term" value="P:cellular response to cytochalasin B"/>
    <property type="evidence" value="ECO:0007669"/>
    <property type="project" value="Ensembl"/>
</dbReference>
<dbReference type="GO" id="GO:0006338">
    <property type="term" value="P:chromatin remodeling"/>
    <property type="evidence" value="ECO:0000303"/>
    <property type="project" value="ComplexPortal"/>
</dbReference>
<dbReference type="GO" id="GO:0007163">
    <property type="term" value="P:establishment or maintenance of cell polarity"/>
    <property type="evidence" value="ECO:0007669"/>
    <property type="project" value="Ensembl"/>
</dbReference>
<dbReference type="GO" id="GO:0001738">
    <property type="term" value="P:morphogenesis of a polarized epithelium"/>
    <property type="evidence" value="ECO:0007669"/>
    <property type="project" value="Ensembl"/>
</dbReference>
<dbReference type="GO" id="GO:0045596">
    <property type="term" value="P:negative regulation of cell differentiation"/>
    <property type="evidence" value="ECO:0000303"/>
    <property type="project" value="ComplexPortal"/>
</dbReference>
<dbReference type="GO" id="GO:0045597">
    <property type="term" value="P:positive regulation of cell differentiation"/>
    <property type="evidence" value="ECO:0000303"/>
    <property type="project" value="ComplexPortal"/>
</dbReference>
<dbReference type="GO" id="GO:0008284">
    <property type="term" value="P:positive regulation of cell population proliferation"/>
    <property type="evidence" value="ECO:0000303"/>
    <property type="project" value="ComplexPortal"/>
</dbReference>
<dbReference type="GO" id="GO:0045893">
    <property type="term" value="P:positive regulation of DNA-templated transcription"/>
    <property type="evidence" value="ECO:0000303"/>
    <property type="project" value="ComplexPortal"/>
</dbReference>
<dbReference type="GO" id="GO:2000781">
    <property type="term" value="P:positive regulation of double-strand break repair"/>
    <property type="evidence" value="ECO:0000303"/>
    <property type="project" value="ComplexPortal"/>
</dbReference>
<dbReference type="GO" id="GO:1905168">
    <property type="term" value="P:positive regulation of double-strand break repair via homologous recombination"/>
    <property type="evidence" value="ECO:0000266"/>
    <property type="project" value="ComplexPortal"/>
</dbReference>
<dbReference type="GO" id="GO:0045663">
    <property type="term" value="P:positive regulation of myoblast differentiation"/>
    <property type="evidence" value="ECO:0000303"/>
    <property type="project" value="ComplexPortal"/>
</dbReference>
<dbReference type="GO" id="GO:1902459">
    <property type="term" value="P:positive regulation of stem cell population maintenance"/>
    <property type="evidence" value="ECO:0000303"/>
    <property type="project" value="ComplexPortal"/>
</dbReference>
<dbReference type="GO" id="GO:0045582">
    <property type="term" value="P:positive regulation of T cell differentiation"/>
    <property type="evidence" value="ECO:0000303"/>
    <property type="project" value="ComplexPortal"/>
</dbReference>
<dbReference type="GO" id="GO:0071896">
    <property type="term" value="P:protein localization to adherens junction"/>
    <property type="evidence" value="ECO:0007669"/>
    <property type="project" value="Ensembl"/>
</dbReference>
<dbReference type="GO" id="GO:0042981">
    <property type="term" value="P:regulation of apoptotic process"/>
    <property type="evidence" value="ECO:0000303"/>
    <property type="project" value="ComplexPortal"/>
</dbReference>
<dbReference type="GO" id="GO:0051726">
    <property type="term" value="P:regulation of cell cycle"/>
    <property type="evidence" value="ECO:0000266"/>
    <property type="project" value="ComplexPortal"/>
</dbReference>
<dbReference type="GO" id="GO:2000779">
    <property type="term" value="P:regulation of double-strand break repair"/>
    <property type="evidence" value="ECO:0000303"/>
    <property type="project" value="ComplexPortal"/>
</dbReference>
<dbReference type="GO" id="GO:0070316">
    <property type="term" value="P:regulation of G0 to G1 transition"/>
    <property type="evidence" value="ECO:0000303"/>
    <property type="project" value="ComplexPortal"/>
</dbReference>
<dbReference type="GO" id="GO:2000045">
    <property type="term" value="P:regulation of G1/S transition of mitotic cell cycle"/>
    <property type="evidence" value="ECO:0000303"/>
    <property type="project" value="ComplexPortal"/>
</dbReference>
<dbReference type="GO" id="GO:0030071">
    <property type="term" value="P:regulation of mitotic metaphase/anaphase transition"/>
    <property type="evidence" value="ECO:0000303"/>
    <property type="project" value="ComplexPortal"/>
</dbReference>
<dbReference type="GO" id="GO:0051621">
    <property type="term" value="P:regulation of norepinephrine uptake"/>
    <property type="evidence" value="ECO:0007669"/>
    <property type="project" value="Ensembl"/>
</dbReference>
<dbReference type="GO" id="GO:2000819">
    <property type="term" value="P:regulation of nucleotide-excision repair"/>
    <property type="evidence" value="ECO:0000303"/>
    <property type="project" value="ComplexPortal"/>
</dbReference>
<dbReference type="GO" id="GO:1903076">
    <property type="term" value="P:regulation of protein localization to plasma membrane"/>
    <property type="evidence" value="ECO:0007669"/>
    <property type="project" value="Ensembl"/>
</dbReference>
<dbReference type="GO" id="GO:1900242">
    <property type="term" value="P:regulation of synaptic vesicle endocytosis"/>
    <property type="evidence" value="ECO:0000314"/>
    <property type="project" value="SynGO"/>
</dbReference>
<dbReference type="GO" id="GO:0006357">
    <property type="term" value="P:regulation of transcription by RNA polymerase II"/>
    <property type="evidence" value="ECO:0000303"/>
    <property type="project" value="ComplexPortal"/>
</dbReference>
<dbReference type="GO" id="GO:0150111">
    <property type="term" value="P:regulation of transepithelial transport"/>
    <property type="evidence" value="ECO:0007669"/>
    <property type="project" value="Ensembl"/>
</dbReference>
<dbReference type="CDD" id="cd10224">
    <property type="entry name" value="ASKHA_NBD_actin"/>
    <property type="match status" value="1"/>
</dbReference>
<dbReference type="FunFam" id="3.30.420.40:FF:000131">
    <property type="entry name" value="Actin, alpha skeletal muscle"/>
    <property type="match status" value="1"/>
</dbReference>
<dbReference type="FunFam" id="3.30.420.40:FF:000291">
    <property type="entry name" value="Actin, alpha skeletal muscle"/>
    <property type="match status" value="1"/>
</dbReference>
<dbReference type="FunFam" id="3.90.640.10:FF:000047">
    <property type="entry name" value="Actin, alpha skeletal muscle"/>
    <property type="match status" value="1"/>
</dbReference>
<dbReference type="FunFam" id="3.30.420.40:FF:000058">
    <property type="entry name" value="Putative actin-related protein 5"/>
    <property type="match status" value="1"/>
</dbReference>
<dbReference type="Gene3D" id="3.30.420.40">
    <property type="match status" value="2"/>
</dbReference>
<dbReference type="Gene3D" id="3.90.640.10">
    <property type="entry name" value="Actin, Chain A, domain 4"/>
    <property type="match status" value="1"/>
</dbReference>
<dbReference type="InterPro" id="IPR004000">
    <property type="entry name" value="Actin"/>
</dbReference>
<dbReference type="InterPro" id="IPR020902">
    <property type="entry name" value="Actin/actin-like_CS"/>
</dbReference>
<dbReference type="InterPro" id="IPR004001">
    <property type="entry name" value="Actin_CS"/>
</dbReference>
<dbReference type="InterPro" id="IPR043129">
    <property type="entry name" value="ATPase_NBD"/>
</dbReference>
<dbReference type="PANTHER" id="PTHR11937">
    <property type="entry name" value="ACTIN"/>
    <property type="match status" value="1"/>
</dbReference>
<dbReference type="Pfam" id="PF00022">
    <property type="entry name" value="Actin"/>
    <property type="match status" value="1"/>
</dbReference>
<dbReference type="PRINTS" id="PR00190">
    <property type="entry name" value="ACTIN"/>
</dbReference>
<dbReference type="SMART" id="SM00268">
    <property type="entry name" value="ACTIN"/>
    <property type="match status" value="1"/>
</dbReference>
<dbReference type="SUPFAM" id="SSF53067">
    <property type="entry name" value="Actin-like ATPase domain"/>
    <property type="match status" value="2"/>
</dbReference>
<dbReference type="PROSITE" id="PS00406">
    <property type="entry name" value="ACTINS_1"/>
    <property type="match status" value="1"/>
</dbReference>
<dbReference type="PROSITE" id="PS00432">
    <property type="entry name" value="ACTINS_2"/>
    <property type="match status" value="1"/>
</dbReference>
<dbReference type="PROSITE" id="PS01132">
    <property type="entry name" value="ACTINS_ACT_LIKE"/>
    <property type="match status" value="1"/>
</dbReference>
<feature type="chain" id="PRO_0000367076" description="Actin, cytoplasmic 1">
    <location>
        <begin position="1"/>
        <end position="375"/>
    </location>
</feature>
<feature type="initiator methionine" description="Removed; alternate" evidence="7">
    <location>
        <position position="1"/>
    </location>
</feature>
<feature type="chain" id="PRO_0000000775" description="Actin, cytoplasmic 1, N-terminally processed">
    <location>
        <begin position="2"/>
        <end position="375"/>
    </location>
</feature>
<feature type="modified residue" description="N-acetylmethionine" evidence="1">
    <location>
        <position position="1"/>
    </location>
</feature>
<feature type="modified residue" description="N-acetylaspartate; in Actin, cytoplasmic 1, N-terminally processed" evidence="7">
    <location>
        <position position="2"/>
    </location>
</feature>
<feature type="modified residue" description="Methionine (R)-sulfoxide" evidence="10">
    <location>
        <position position="44"/>
    </location>
</feature>
<feature type="modified residue" description="Methionine (R)-sulfoxide" evidence="10">
    <location>
        <position position="47"/>
    </location>
</feature>
<feature type="modified residue" description="Tele-methylhistidine" evidence="7 13">
    <location>
        <position position="73"/>
    </location>
</feature>
<feature type="modified residue" description="N6-methyllysine" evidence="1">
    <location>
        <position position="84"/>
    </location>
</feature>
<feature type="sequence conflict" description="In Ref. 5; CAA27396/AAA37144." evidence="17" ref="5">
    <original>P</original>
    <variation>S</variation>
    <location>
        <position position="38"/>
    </location>
</feature>
<feature type="sequence conflict" description="In Ref. 2; BAE39957." evidence="17" ref="2">
    <original>S</original>
    <variation>F</variation>
    <location>
        <position position="52"/>
    </location>
</feature>
<feature type="sequence conflict" description="In Ref. 2; BAE35572." evidence="17" ref="2">
    <original>D</original>
    <variation>E</variation>
    <location>
        <position position="80"/>
    </location>
</feature>
<feature type="sequence conflict" description="In Ref. 2; BAE39957." evidence="17" ref="2">
    <original>P</original>
    <variation>T</variation>
    <location>
        <position position="109"/>
    </location>
</feature>
<feature type="sequence conflict" description="In Ref. 2; BAE39957." evidence="17" ref="2">
    <original>G</original>
    <variation>R</variation>
    <location>
        <position position="156"/>
    </location>
</feature>
<feature type="sequence conflict" description="In Ref. 2; BAE39957." evidence="17" ref="2">
    <original>L</original>
    <variation>V</variation>
    <location>
        <position position="178"/>
    </location>
</feature>
<evidence type="ECO:0000250" key="1">
    <source>
        <dbReference type="UniProtKB" id="P60709"/>
    </source>
</evidence>
<evidence type="ECO:0000250" key="2">
    <source>
        <dbReference type="UniProtKB" id="P68137"/>
    </source>
</evidence>
<evidence type="ECO:0000250" key="3">
    <source>
        <dbReference type="UniProtKB" id="Q6QAQ1"/>
    </source>
</evidence>
<evidence type="ECO:0000269" key="4">
    <source>
    </source>
</evidence>
<evidence type="ECO:0000269" key="5">
    <source>
    </source>
</evidence>
<evidence type="ECO:0000269" key="6">
    <source>
    </source>
</evidence>
<evidence type="ECO:0000269" key="7">
    <source>
    </source>
</evidence>
<evidence type="ECO:0000269" key="8">
    <source>
    </source>
</evidence>
<evidence type="ECO:0000269" key="9">
    <source>
    </source>
</evidence>
<evidence type="ECO:0000269" key="10">
    <source>
    </source>
</evidence>
<evidence type="ECO:0000269" key="11">
    <source>
    </source>
</evidence>
<evidence type="ECO:0000269" key="12">
    <source>
    </source>
</evidence>
<evidence type="ECO:0000269" key="13">
    <source>
    </source>
</evidence>
<evidence type="ECO:0000269" key="14">
    <source>
    </source>
</evidence>
<evidence type="ECO:0000269" key="15">
    <source>
    </source>
</evidence>
<evidence type="ECO:0000269" key="16">
    <source>
    </source>
</evidence>
<evidence type="ECO:0000305" key="17"/>
<keyword id="KW-0007">Acetylation</keyword>
<keyword id="KW-0067">ATP-binding</keyword>
<keyword id="KW-0963">Cytoplasm</keyword>
<keyword id="KW-0206">Cytoskeleton</keyword>
<keyword id="KW-0903">Direct protein sequencing</keyword>
<keyword id="KW-0378">Hydrolase</keyword>
<keyword id="KW-0488">Methylation</keyword>
<keyword id="KW-0547">Nucleotide-binding</keyword>
<keyword id="KW-0539">Nucleus</keyword>
<keyword id="KW-0558">Oxidation</keyword>
<keyword id="KW-1185">Reference proteome</keyword>
<keyword id="KW-0832">Ubl conjugation</keyword>
<sequence length="375" mass="41737">MDDDIAALVVDNGSGMCKAGFAGDDAPRAVFPSIVGRPRHQGVMVGMGQKDSYVGDEAQSKRGILTLKYPIEHGIVTNWDDMEKIWHHTFYNELRVAPEEHPVLLTEAPLNPKANREKMTQIMFETFNTPAMYVAIQAVLSLYASGRTTGIVMDSGDGVTHTVPIYEGYALPHAILRLDLAGRDLTDYLMKILTERGYSFTTTAEREIVRDIKEKLCYVALDFEQEMATAASSSSLEKSYELPDGQVITIGNERFRCPEALFQPSFLGMESCGIHETTFNSIMKCDVDIRKDLYANTVLSGGTTMYPGIADRMQKEITALAPSTMKIKIIAPPERKYSVWIGGSILASLSTFQQMWISKQEYDESGPSIVHRKCF</sequence>
<organism>
    <name type="scientific">Mus musculus</name>
    <name type="common">Mouse</name>
    <dbReference type="NCBI Taxonomy" id="10090"/>
    <lineage>
        <taxon>Eukaryota</taxon>
        <taxon>Metazoa</taxon>
        <taxon>Chordata</taxon>
        <taxon>Craniata</taxon>
        <taxon>Vertebrata</taxon>
        <taxon>Euteleostomi</taxon>
        <taxon>Mammalia</taxon>
        <taxon>Eutheria</taxon>
        <taxon>Euarchontoglires</taxon>
        <taxon>Glires</taxon>
        <taxon>Rodentia</taxon>
        <taxon>Myomorpha</taxon>
        <taxon>Muroidea</taxon>
        <taxon>Muridae</taxon>
        <taxon>Murinae</taxon>
        <taxon>Mus</taxon>
        <taxon>Mus</taxon>
    </lineage>
</organism>
<comment type="function">
    <text evidence="1 3 9 12">Actin is a highly conserved protein that polymerizes to produce filaments that form cross-linked networks in the cytoplasm of cells (By similarity). Actin exists in both monomeric (G-actin) and polymeric (F-actin) forms, both forms playing key functions, such as cell motility and contraction (By similarity). In addition to their role in the cytoplasmic cytoskeleton, G- and F-actin also localize in the nucleus, and regulate gene transcription and motility and repair of damaged DNA (PubMed:23558171, PubMed:25759381). Plays a role in the assembly of the gamma-tubulin ring complex (gTuRC), which regulates the minus-end nucleation of alpha-beta tubulin heterodimers that grow into microtubule protafilaments (By similarity). Part of the ACTR1A/ACTB filament around which the dynactin complex is built (By similarity). The dynactin multiprotein complex activates the molecular motor dynein for ultra-processive transport along microtubules (By similarity).</text>
</comment>
<comment type="catalytic activity">
    <reaction evidence="2">
        <text>ATP + H2O = ADP + phosphate + H(+)</text>
        <dbReference type="Rhea" id="RHEA:13065"/>
        <dbReference type="ChEBI" id="CHEBI:15377"/>
        <dbReference type="ChEBI" id="CHEBI:15378"/>
        <dbReference type="ChEBI" id="CHEBI:30616"/>
        <dbReference type="ChEBI" id="CHEBI:43474"/>
        <dbReference type="ChEBI" id="CHEBI:456216"/>
    </reaction>
</comment>
<comment type="subunit">
    <text evidence="1 3 4 6 8 11 12 16">Polymerization of globular actin (G-actin) leads to a structural filament (F-actin) in the form of a two-stranded helix (PubMed:25759381). Each actin can bind to 4 others (By similarity). Identified in a IGF2BP1-dependent mRNP granule complex containing untranslated mRNAs (By similarity). Component of the BAF complex, which includes at least actin (ACTB), ARID1A, ARID1B/BAF250, SMARCA2, SMARCA4/BRG1, ACTL6A/BAF53, ACTL6B/BAF53B, SMARCE1/BAF57 SMARCC1/BAF155, SMARCC2/BAF170, SMARCB1/SNF5/INI1, and one or more of SMARCD1/BAF60A, SMARCD2/BAF60B, or SMARCD3/BAF60C (By similarity). In muscle cells, the BAF complex also contains DPF3 (By similarity). Found in a complex with XPO6, Ran, ACTB and PFN1 (By similarity). Interacts with PFN1 (By similarity). Interacts with XPO6 and EMD (By similarity). Interacts with ERBB2 (By similarity). Interacts with GCSAM (By similarity). Interacts with TBC1D21 (PubMed:21128978). Interacts with CPNE1 (via VWFA domain) and CPNE4 (via VWFA domain) (PubMed:12522145). Interacts with DHX9 (via C-terminus); this interaction is direct and mediates the attachment to nuclear ribonucleoprotein complexes (By similarity). Interacts with FAM107A (PubMed:21969592). Associates with the gamma-tubulin ring complex (gTuRC) consisting of TUBGCP2, TUBGCP3, TUBGCP4, TUBGCP5 and TUBGCP6 and gamma-tubulin TUBG1 or TUBG2; within the complex, interacts with TUBGCP3 and TUBGCP6 to form a luminal bridge with MZT1 that stabilizes the initial structure during complex assembly (By similarity). Part of the ACTR1A/ACTB filament around which the dynactin complex is built (By similarity). The filament contains 8 copies of ACTR1A and 1 ACTB (By similarity). Interacts with TPRN which forms ring-like structures in the stereocilium taper region; the interaction may stabilize stereocilia in inner ear hair cells (PubMed:37952086). Interacts with AMOTL2 (via N-terminus), the interaction facilitates binding of cell junction complexes to actin fibers in endothelial cells (PubMed:24806444).</text>
</comment>
<comment type="interaction">
    <interactant intactId="EBI-353957">
        <id>P60710</id>
    </interactant>
    <interactant intactId="EBI-7429264">
        <id>P97792</id>
        <label>Cxadr</label>
    </interactant>
    <organismsDiffer>false</organismsDiffer>
    <experiments>6</experiments>
</comment>
<comment type="interaction">
    <interactant intactId="EBI-353957">
        <id>P60710</id>
    </interactant>
    <interactant intactId="EBI-8010314">
        <id>Q923J1</id>
        <label>Trpm7</label>
    </interactant>
    <organismsDiffer>false</organismsDiffer>
    <experiments>2</experiments>
</comment>
<comment type="subcellular location">
    <subcellularLocation>
        <location>Cytoplasm</location>
        <location>Cytoskeleton</location>
    </subcellularLocation>
    <subcellularLocation>
        <location evidence="9 12">Nucleus</location>
    </subcellularLocation>
    <text evidence="1">Localized in cytoplasmic mRNP granules containing untranslated mRNAs.</text>
</comment>
<comment type="tissue specificity">
    <text evidence="14 15">Expressed in the epididymis (at protein level) (PubMed:30659401). Expressed in the kidney (at protein level) (PubMed:31605441).</text>
</comment>
<comment type="PTM">
    <text evidence="5">ISGylated.</text>
</comment>
<comment type="PTM">
    <text evidence="10">Oxidation of Met-44 and Met-47 by MICALs (MICAL1, MICAL2 or MICAL3) to form methionine sulfoxide promotes actin filament depolymerization (PubMed:23911929). MICAL1 and MICAL2 produce the (R)-S-oxide form. The (R)-S-oxide form is reverted by MSRB1 and MSRB2, which promote actin repolymerization (PubMed:23911929).</text>
</comment>
<comment type="PTM">
    <text evidence="1">Monomethylation at Lys-84 (K84me1) regulates actin-myosin interaction and actomyosin-dependent processes. Demethylation by ALKBH4 is required for maintaining actomyosin dynamics supporting normal cleavage furrow ingression during cytokinesis and cell migration.</text>
</comment>
<comment type="PTM">
    <text evidence="13">Methylated at His-73 by SETD3 (PubMed:30626964). Methylation at His-73 is required for smooth muscle contraction of the laboring uterus during delivery (PubMed:30626964).</text>
</comment>
<comment type="PTM">
    <molecule>Actin, cytoplasmic 1</molecule>
    <text evidence="1">N-terminal cleavage of acetylated methionine of immature cytoplasmic actin by ACTMAP.</text>
</comment>
<comment type="PTM">
    <molecule>Actin, cytoplasmic 1, N-terminally processed</molecule>
    <text evidence="1">N-terminal acetylation by NAA80 affects actin filament depolymerization and elongation, including elongation driven by formins. In contrast, filament nucleation by the Arp2/3 complex is not affected.</text>
</comment>
<comment type="miscellaneous">
    <text evidence="17">In vertebrates 3 main groups of actin isoforms, alpha, beta and gamma have been identified. The alpha actins are found in muscle tissues and are a major constituent of the contractile apparatus. The beta and gamma actins coexist in most cell types as components of the cytoskeleton and as mediators of internal cell motility.</text>
</comment>
<comment type="similarity">
    <text evidence="17">Belongs to the actin family.</text>
</comment>